<evidence type="ECO:0000255" key="1">
    <source>
        <dbReference type="HAMAP-Rule" id="MF_01315"/>
    </source>
</evidence>
<evidence type="ECO:0000256" key="2">
    <source>
        <dbReference type="SAM" id="MobiDB-lite"/>
    </source>
</evidence>
<evidence type="ECO:0000305" key="3"/>
<sequence length="125" mass="14230">MARLAGVDIPNEKRIEIALTYIFGVGRTRAKETLAATGISPDIRVKDLTDEQLITLRDYLEANYKIEGDLRREVDADIRRKIQINCYQGQRHRKGLPVRGQRTKTNARTRKGPKRTVAGKKKATK</sequence>
<organism>
    <name type="scientific">Bifidobacterium longum (strain DJO10A)</name>
    <dbReference type="NCBI Taxonomy" id="205913"/>
    <lineage>
        <taxon>Bacteria</taxon>
        <taxon>Bacillati</taxon>
        <taxon>Actinomycetota</taxon>
        <taxon>Actinomycetes</taxon>
        <taxon>Bifidobacteriales</taxon>
        <taxon>Bifidobacteriaceae</taxon>
        <taxon>Bifidobacterium</taxon>
    </lineage>
</organism>
<comment type="function">
    <text evidence="1">Located at the top of the head of the 30S subunit, it contacts several helices of the 16S rRNA. In the 70S ribosome it contacts the 23S rRNA (bridge B1a) and protein L5 of the 50S subunit (bridge B1b), connecting the 2 subunits; these bridges are implicated in subunit movement. Contacts the tRNAs in the A and P-sites.</text>
</comment>
<comment type="subunit">
    <text evidence="1">Part of the 30S ribosomal subunit. Forms a loose heterodimer with protein S19. Forms two bridges to the 50S subunit in the 70S ribosome.</text>
</comment>
<comment type="similarity">
    <text evidence="1">Belongs to the universal ribosomal protein uS13 family.</text>
</comment>
<keyword id="KW-0687">Ribonucleoprotein</keyword>
<keyword id="KW-0689">Ribosomal protein</keyword>
<keyword id="KW-0694">RNA-binding</keyword>
<keyword id="KW-0699">rRNA-binding</keyword>
<keyword id="KW-0820">tRNA-binding</keyword>
<gene>
    <name evidence="1" type="primary">rpsM</name>
    <name type="ordered locus">BLD_1731</name>
</gene>
<proteinExistence type="inferred from homology"/>
<feature type="chain" id="PRO_1000141222" description="Small ribosomal subunit protein uS13">
    <location>
        <begin position="1"/>
        <end position="125"/>
    </location>
</feature>
<feature type="region of interest" description="Disordered" evidence="2">
    <location>
        <begin position="90"/>
        <end position="125"/>
    </location>
</feature>
<dbReference type="EMBL" id="CP000605">
    <property type="protein sequence ID" value="ACD99176.1"/>
    <property type="molecule type" value="Genomic_DNA"/>
</dbReference>
<dbReference type="RefSeq" id="WP_007053047.1">
    <property type="nucleotide sequence ID" value="NZ_AABM02000016.1"/>
</dbReference>
<dbReference type="SMR" id="B3DQD8"/>
<dbReference type="GeneID" id="69578873"/>
<dbReference type="KEGG" id="blj:BLD_1731"/>
<dbReference type="HOGENOM" id="CLU_103849_1_2_11"/>
<dbReference type="Proteomes" id="UP000002419">
    <property type="component" value="Chromosome"/>
</dbReference>
<dbReference type="GO" id="GO:0005829">
    <property type="term" value="C:cytosol"/>
    <property type="evidence" value="ECO:0007669"/>
    <property type="project" value="TreeGrafter"/>
</dbReference>
<dbReference type="GO" id="GO:0015935">
    <property type="term" value="C:small ribosomal subunit"/>
    <property type="evidence" value="ECO:0007669"/>
    <property type="project" value="TreeGrafter"/>
</dbReference>
<dbReference type="GO" id="GO:0019843">
    <property type="term" value="F:rRNA binding"/>
    <property type="evidence" value="ECO:0007669"/>
    <property type="project" value="UniProtKB-UniRule"/>
</dbReference>
<dbReference type="GO" id="GO:0003735">
    <property type="term" value="F:structural constituent of ribosome"/>
    <property type="evidence" value="ECO:0007669"/>
    <property type="project" value="InterPro"/>
</dbReference>
<dbReference type="GO" id="GO:0000049">
    <property type="term" value="F:tRNA binding"/>
    <property type="evidence" value="ECO:0007669"/>
    <property type="project" value="UniProtKB-UniRule"/>
</dbReference>
<dbReference type="GO" id="GO:0006412">
    <property type="term" value="P:translation"/>
    <property type="evidence" value="ECO:0007669"/>
    <property type="project" value="UniProtKB-UniRule"/>
</dbReference>
<dbReference type="FunFam" id="1.10.8.50:FF:000001">
    <property type="entry name" value="30S ribosomal protein S13"/>
    <property type="match status" value="1"/>
</dbReference>
<dbReference type="FunFam" id="4.10.910.10:FF:000001">
    <property type="entry name" value="30S ribosomal protein S13"/>
    <property type="match status" value="1"/>
</dbReference>
<dbReference type="Gene3D" id="1.10.8.50">
    <property type="match status" value="1"/>
</dbReference>
<dbReference type="Gene3D" id="4.10.910.10">
    <property type="entry name" value="30s ribosomal protein s13, domain 2"/>
    <property type="match status" value="1"/>
</dbReference>
<dbReference type="HAMAP" id="MF_01315">
    <property type="entry name" value="Ribosomal_uS13"/>
    <property type="match status" value="1"/>
</dbReference>
<dbReference type="InterPro" id="IPR027437">
    <property type="entry name" value="Rbsml_uS13_C"/>
</dbReference>
<dbReference type="InterPro" id="IPR001892">
    <property type="entry name" value="Ribosomal_uS13"/>
</dbReference>
<dbReference type="InterPro" id="IPR010979">
    <property type="entry name" value="Ribosomal_uS13-like_H2TH"/>
</dbReference>
<dbReference type="InterPro" id="IPR019980">
    <property type="entry name" value="Ribosomal_uS13_bac-type"/>
</dbReference>
<dbReference type="InterPro" id="IPR018269">
    <property type="entry name" value="Ribosomal_uS13_CS"/>
</dbReference>
<dbReference type="NCBIfam" id="TIGR03631">
    <property type="entry name" value="uS13_bact"/>
    <property type="match status" value="1"/>
</dbReference>
<dbReference type="PANTHER" id="PTHR10871">
    <property type="entry name" value="30S RIBOSOMAL PROTEIN S13/40S RIBOSOMAL PROTEIN S18"/>
    <property type="match status" value="1"/>
</dbReference>
<dbReference type="PANTHER" id="PTHR10871:SF1">
    <property type="entry name" value="SMALL RIBOSOMAL SUBUNIT PROTEIN US13M"/>
    <property type="match status" value="1"/>
</dbReference>
<dbReference type="Pfam" id="PF00416">
    <property type="entry name" value="Ribosomal_S13"/>
    <property type="match status" value="1"/>
</dbReference>
<dbReference type="PIRSF" id="PIRSF002134">
    <property type="entry name" value="Ribosomal_S13"/>
    <property type="match status" value="1"/>
</dbReference>
<dbReference type="SUPFAM" id="SSF46946">
    <property type="entry name" value="S13-like H2TH domain"/>
    <property type="match status" value="1"/>
</dbReference>
<dbReference type="PROSITE" id="PS00646">
    <property type="entry name" value="RIBOSOMAL_S13_1"/>
    <property type="match status" value="1"/>
</dbReference>
<dbReference type="PROSITE" id="PS50159">
    <property type="entry name" value="RIBOSOMAL_S13_2"/>
    <property type="match status" value="1"/>
</dbReference>
<protein>
    <recommendedName>
        <fullName evidence="1">Small ribosomal subunit protein uS13</fullName>
    </recommendedName>
    <alternativeName>
        <fullName evidence="3">30S ribosomal protein S13</fullName>
    </alternativeName>
</protein>
<reference key="1">
    <citation type="journal article" date="2008" name="BMC Genomics">
        <title>Comparative genomic analysis of the gut bacterium Bifidobacterium longum reveals loci susceptible to deletion during pure culture growth.</title>
        <authorList>
            <person name="Lee J.H."/>
            <person name="Karamychev V.N."/>
            <person name="Kozyavkin S.A."/>
            <person name="Mills D."/>
            <person name="Pavlov A.R."/>
            <person name="Pavlova N.V."/>
            <person name="Polouchine N.N."/>
            <person name="Richardson P.M."/>
            <person name="Shakhova V.V."/>
            <person name="Slesarev A.I."/>
            <person name="Weimer B."/>
            <person name="O'Sullivan D.J."/>
        </authorList>
    </citation>
    <scope>NUCLEOTIDE SEQUENCE [LARGE SCALE GENOMIC DNA]</scope>
    <source>
        <strain>DJO10A</strain>
    </source>
</reference>
<name>RS13_BIFLD</name>
<accession>B3DQD8</accession>